<dbReference type="EMBL" id="CP000908">
    <property type="protein sequence ID" value="ABY29330.1"/>
    <property type="molecule type" value="Genomic_DNA"/>
</dbReference>
<dbReference type="SMR" id="P0DX95"/>
<dbReference type="KEGG" id="mex:Mext_0925"/>
<dbReference type="GO" id="GO:0005737">
    <property type="term" value="C:cytoplasm"/>
    <property type="evidence" value="ECO:0007669"/>
    <property type="project" value="UniProtKB-SubCell"/>
</dbReference>
<dbReference type="GO" id="GO:0003677">
    <property type="term" value="F:DNA binding"/>
    <property type="evidence" value="ECO:0007669"/>
    <property type="project" value="UniProtKB-KW"/>
</dbReference>
<dbReference type="GO" id="GO:0003700">
    <property type="term" value="F:DNA-binding transcription factor activity"/>
    <property type="evidence" value="ECO:0007669"/>
    <property type="project" value="InterPro"/>
</dbReference>
<dbReference type="GO" id="GO:0006950">
    <property type="term" value="P:response to stress"/>
    <property type="evidence" value="ECO:0007669"/>
    <property type="project" value="TreeGrafter"/>
</dbReference>
<dbReference type="FunFam" id="1.10.10.10:FF:000163">
    <property type="entry name" value="MarR family transcriptional regulator"/>
    <property type="match status" value="1"/>
</dbReference>
<dbReference type="Gene3D" id="1.10.10.10">
    <property type="entry name" value="Winged helix-like DNA-binding domain superfamily/Winged helix DNA-binding domain"/>
    <property type="match status" value="1"/>
</dbReference>
<dbReference type="InterPro" id="IPR000835">
    <property type="entry name" value="HTH_MarR-typ"/>
</dbReference>
<dbReference type="InterPro" id="IPR039422">
    <property type="entry name" value="MarR/SlyA-like"/>
</dbReference>
<dbReference type="InterPro" id="IPR055166">
    <property type="entry name" value="Transc_reg_Sar_Rot_HTH"/>
</dbReference>
<dbReference type="InterPro" id="IPR036388">
    <property type="entry name" value="WH-like_DNA-bd_sf"/>
</dbReference>
<dbReference type="InterPro" id="IPR036390">
    <property type="entry name" value="WH_DNA-bd_sf"/>
</dbReference>
<dbReference type="PANTHER" id="PTHR33164:SF5">
    <property type="entry name" value="ORGANIC HYDROPEROXIDE RESISTANCE TRANSCRIPTIONAL REGULATOR"/>
    <property type="match status" value="1"/>
</dbReference>
<dbReference type="PANTHER" id="PTHR33164">
    <property type="entry name" value="TRANSCRIPTIONAL REGULATOR, MARR FAMILY"/>
    <property type="match status" value="1"/>
</dbReference>
<dbReference type="Pfam" id="PF22381">
    <property type="entry name" value="Staph_reg_Sar_Rot"/>
    <property type="match status" value="1"/>
</dbReference>
<dbReference type="PRINTS" id="PR00598">
    <property type="entry name" value="HTHMARR"/>
</dbReference>
<dbReference type="SMART" id="SM00347">
    <property type="entry name" value="HTH_MARR"/>
    <property type="match status" value="1"/>
</dbReference>
<dbReference type="SUPFAM" id="SSF46785">
    <property type="entry name" value="Winged helix' DNA-binding domain"/>
    <property type="match status" value="1"/>
</dbReference>
<dbReference type="PROSITE" id="PS50995">
    <property type="entry name" value="HTH_MARR_2"/>
    <property type="match status" value="1"/>
</dbReference>
<accession>P0DX95</accession>
<organism>
    <name type="scientific">Methylorubrum extorquens (strain PA1)</name>
    <name type="common">Methylobacterium extorquens</name>
    <dbReference type="NCBI Taxonomy" id="419610"/>
    <lineage>
        <taxon>Bacteria</taxon>
        <taxon>Pseudomonadati</taxon>
        <taxon>Pseudomonadota</taxon>
        <taxon>Alphaproteobacteria</taxon>
        <taxon>Hyphomicrobiales</taxon>
        <taxon>Methylobacteriaceae</taxon>
        <taxon>Methylorubrum</taxon>
    </lineage>
</organism>
<gene>
    <name evidence="3" type="primary">ttmR</name>
    <name evidence="5" type="ordered locus">Mext_0925</name>
</gene>
<name>TTMR_METEP</name>
<evidence type="ECO:0000255" key="1">
    <source>
        <dbReference type="PROSITE-ProRule" id="PRU00345"/>
    </source>
</evidence>
<evidence type="ECO:0000269" key="2">
    <source>
    </source>
</evidence>
<evidence type="ECO:0000303" key="3">
    <source>
    </source>
</evidence>
<evidence type="ECO:0000305" key="4"/>
<evidence type="ECO:0000312" key="5">
    <source>
        <dbReference type="EMBL" id="ABY29330.1"/>
    </source>
</evidence>
<proteinExistence type="predicted"/>
<reference key="1">
    <citation type="submission" date="2007-12" db="EMBL/GenBank/DDBJ databases">
        <title>Complete sequence of Methylobacterium extorquens PA1.</title>
        <authorList>
            <consortium name="US DOE Joint Genome Institute"/>
            <person name="Copeland A."/>
            <person name="Lucas S."/>
            <person name="Lapidus A."/>
            <person name="Barry K."/>
            <person name="Glavina del Rio T."/>
            <person name="Dalin E."/>
            <person name="Tice H."/>
            <person name="Pitluck S."/>
            <person name="Saunders E."/>
            <person name="Brettin T."/>
            <person name="Bruce D."/>
            <person name="Detter J.C."/>
            <person name="Han C."/>
            <person name="Schmutz J."/>
            <person name="Larimer F."/>
            <person name="Land M."/>
            <person name="Hauser L."/>
            <person name="Kyrpides N."/>
            <person name="Kim E."/>
            <person name="Marx C."/>
            <person name="Richardson P."/>
        </authorList>
    </citation>
    <scope>NUCLEOTIDE SEQUENCE [LARGE SCALE GENOMIC DNA]</scope>
    <source>
        <strain>PA1</strain>
    </source>
</reference>
<reference key="2">
    <citation type="journal article" date="2021" name="J. Bacteriol.">
        <title>Formaldehyde-responsive proteins, TtmR and EfgA, reveal a tradeoff between formaldehyde resistance and efficient transition to methylotrophy in Methylorubrum extorquens.</title>
        <authorList>
            <person name="Bazurto J.V."/>
            <person name="Bruger E.L."/>
            <person name="Lee J.A."/>
            <person name="Lambert L.B."/>
            <person name="Marx C.J."/>
        </authorList>
    </citation>
    <scope>FUNCTION</scope>
    <scope>DISRUPTION PHENOTYPE</scope>
    <source>
        <strain>PA1</strain>
    </source>
</reference>
<sequence>MIRGGGSPSPYPSVPNPSAGLKRQCAVGAPRKSVMSQTGRDDPQSLDSQLCFAVYAAAHAFGRAYRSLLAHHELTYPQYLVLLVLWEEEGLSVKEIGSRLFLDSGTLTPLLKRLEASGHVRRARDRPDERQVSIFLTDKGRGLKGKMDCLPHTVGGMTGMTLDERRALLDNLASMRDELHARAGSTELPAANASR</sequence>
<comment type="function">
    <text evidence="2">Formaldehyde-responsive transcription factor that modulates resistance to stress induced by formaldehyde (PubMed:33619153). Impacts the expression of a number of genes encoding transcription factors and/or involved in stress response, including efgA, and which probably collectively trigger a formaldehyde-specific physiological response (PubMed:33619153). Required for optimal transition to methylotrophy (PubMed:33619153). Not involved in a general stress response (PubMed:33619153).</text>
</comment>
<comment type="subcellular location">
    <subcellularLocation>
        <location evidence="4">Cytoplasm</location>
    </subcellularLocation>
</comment>
<comment type="disruption phenotype">
    <text evidence="2">Disruption of the gene confers the ability to use formaldehyde as a sole source of carbon and energy (PubMed:33619153). It also confers formaldehyde resistance during the consumption of alternative carbon sources (PubMed:33619153). Mutants are defective in the transition to methylotrophy (PubMed:33619153).</text>
</comment>
<comment type="miscellaneous">
    <text evidence="2">Can modulate formaldehyde resistance independently of the formaldehyde-sensing protein EfgA.</text>
</comment>
<keyword id="KW-0963">Cytoplasm</keyword>
<keyword id="KW-0238">DNA-binding</keyword>
<keyword id="KW-0346">Stress response</keyword>
<keyword id="KW-0804">Transcription</keyword>
<keyword id="KW-0805">Transcription regulation</keyword>
<protein>
    <recommendedName>
        <fullName evidence="4">HTH-type transcriptional regulator TtmR</fullName>
    </recommendedName>
    <alternativeName>
        <fullName evidence="3">Formaldehyde-responsive transcription factor</fullName>
    </alternativeName>
    <alternativeName>
        <fullName evidence="3">Transition to methylotrophy regulator</fullName>
    </alternativeName>
</protein>
<feature type="chain" id="PRO_0000459622" description="HTH-type transcriptional regulator TtmR">
    <location>
        <begin position="1"/>
        <end position="195"/>
    </location>
</feature>
<feature type="domain" description="HTH marR-type" evidence="1">
    <location>
        <begin position="47"/>
        <end position="177"/>
    </location>
</feature>
<feature type="DNA-binding region" description="H-T-H motif" evidence="1">
    <location>
        <begin position="93"/>
        <end position="116"/>
    </location>
</feature>